<comment type="function">
    <text evidence="1">Located on the platform of the 30S subunit, it bridges several disparate RNA helices of the 16S rRNA. Forms part of the Shine-Dalgarno cleft in the 70S ribosome.</text>
</comment>
<comment type="subunit">
    <text evidence="1">Part of the 30S ribosomal subunit. Interacts with proteins S7 and S18. Binds to IF-3.</text>
</comment>
<comment type="similarity">
    <text evidence="1">Belongs to the universal ribosomal protein uS11 family.</text>
</comment>
<proteinExistence type="inferred from homology"/>
<reference key="1">
    <citation type="journal article" date="2009" name="Science">
        <title>The dynamics and time scale of ongoing genomic erosion in symbiotic bacteria.</title>
        <authorList>
            <person name="Moran N.A."/>
            <person name="McLaughlin H.J."/>
            <person name="Sorek R."/>
        </authorList>
    </citation>
    <scope>NUCLEOTIDE SEQUENCE [LARGE SCALE GENOMIC DNA]</scope>
    <source>
        <strain>Tuc7</strain>
    </source>
</reference>
<dbReference type="EMBL" id="CP001158">
    <property type="protein sequence ID" value="ACL30291.1"/>
    <property type="molecule type" value="Genomic_DNA"/>
</dbReference>
<dbReference type="RefSeq" id="WP_009874452.1">
    <property type="nucleotide sequence ID" value="NC_011834.1"/>
</dbReference>
<dbReference type="SMR" id="B8D826"/>
<dbReference type="KEGG" id="bau:BUAPTUC7_495"/>
<dbReference type="HOGENOM" id="CLU_072439_5_0_6"/>
<dbReference type="GO" id="GO:1990904">
    <property type="term" value="C:ribonucleoprotein complex"/>
    <property type="evidence" value="ECO:0007669"/>
    <property type="project" value="UniProtKB-KW"/>
</dbReference>
<dbReference type="GO" id="GO:0005840">
    <property type="term" value="C:ribosome"/>
    <property type="evidence" value="ECO:0007669"/>
    <property type="project" value="UniProtKB-KW"/>
</dbReference>
<dbReference type="GO" id="GO:0019843">
    <property type="term" value="F:rRNA binding"/>
    <property type="evidence" value="ECO:0007669"/>
    <property type="project" value="UniProtKB-UniRule"/>
</dbReference>
<dbReference type="GO" id="GO:0003735">
    <property type="term" value="F:structural constituent of ribosome"/>
    <property type="evidence" value="ECO:0007669"/>
    <property type="project" value="InterPro"/>
</dbReference>
<dbReference type="GO" id="GO:0006412">
    <property type="term" value="P:translation"/>
    <property type="evidence" value="ECO:0007669"/>
    <property type="project" value="UniProtKB-UniRule"/>
</dbReference>
<dbReference type="FunFam" id="3.30.420.80:FF:000001">
    <property type="entry name" value="30S ribosomal protein S11"/>
    <property type="match status" value="1"/>
</dbReference>
<dbReference type="Gene3D" id="3.30.420.80">
    <property type="entry name" value="Ribosomal protein S11"/>
    <property type="match status" value="1"/>
</dbReference>
<dbReference type="HAMAP" id="MF_01310">
    <property type="entry name" value="Ribosomal_uS11"/>
    <property type="match status" value="1"/>
</dbReference>
<dbReference type="InterPro" id="IPR001971">
    <property type="entry name" value="Ribosomal_uS11"/>
</dbReference>
<dbReference type="InterPro" id="IPR019981">
    <property type="entry name" value="Ribosomal_uS11_bac-type"/>
</dbReference>
<dbReference type="InterPro" id="IPR018102">
    <property type="entry name" value="Ribosomal_uS11_CS"/>
</dbReference>
<dbReference type="InterPro" id="IPR036967">
    <property type="entry name" value="Ribosomal_uS11_sf"/>
</dbReference>
<dbReference type="NCBIfam" id="NF003698">
    <property type="entry name" value="PRK05309.1"/>
    <property type="match status" value="1"/>
</dbReference>
<dbReference type="NCBIfam" id="TIGR03632">
    <property type="entry name" value="uS11_bact"/>
    <property type="match status" value="1"/>
</dbReference>
<dbReference type="PANTHER" id="PTHR11759">
    <property type="entry name" value="40S RIBOSOMAL PROTEIN S14/30S RIBOSOMAL PROTEIN S11"/>
    <property type="match status" value="1"/>
</dbReference>
<dbReference type="Pfam" id="PF00411">
    <property type="entry name" value="Ribosomal_S11"/>
    <property type="match status" value="1"/>
</dbReference>
<dbReference type="PIRSF" id="PIRSF002131">
    <property type="entry name" value="Ribosomal_S11"/>
    <property type="match status" value="1"/>
</dbReference>
<dbReference type="SUPFAM" id="SSF53137">
    <property type="entry name" value="Translational machinery components"/>
    <property type="match status" value="1"/>
</dbReference>
<dbReference type="PROSITE" id="PS00054">
    <property type="entry name" value="RIBOSOMAL_S11"/>
    <property type="match status" value="1"/>
</dbReference>
<sequence>MVKNSTSIRTRKRVKKQILDGIAHIHASFNNTIVTITDRQGNALGWATSGGSGFRGSRKSTPFAAQVAAERCAEIVKDYGIKNLEVMVKGPGPGRESTIRALNAAGFRITNITDVTPIPHNGCRPPKKRRV</sequence>
<evidence type="ECO:0000255" key="1">
    <source>
        <dbReference type="HAMAP-Rule" id="MF_01310"/>
    </source>
</evidence>
<evidence type="ECO:0000305" key="2"/>
<gene>
    <name evidence="1" type="primary">rpsK</name>
    <name type="ordered locus">BUAPTUC7_495</name>
</gene>
<keyword id="KW-0687">Ribonucleoprotein</keyword>
<keyword id="KW-0689">Ribosomal protein</keyword>
<keyword id="KW-0694">RNA-binding</keyword>
<keyword id="KW-0699">rRNA-binding</keyword>
<organism>
    <name type="scientific">Buchnera aphidicola subsp. Acyrthosiphon pisum (strain Tuc7)</name>
    <dbReference type="NCBI Taxonomy" id="561501"/>
    <lineage>
        <taxon>Bacteria</taxon>
        <taxon>Pseudomonadati</taxon>
        <taxon>Pseudomonadota</taxon>
        <taxon>Gammaproteobacteria</taxon>
        <taxon>Enterobacterales</taxon>
        <taxon>Erwiniaceae</taxon>
        <taxon>Buchnera</taxon>
    </lineage>
</organism>
<feature type="chain" id="PRO_1000165536" description="Small ribosomal subunit protein uS11">
    <location>
        <begin position="1"/>
        <end position="131"/>
    </location>
</feature>
<protein>
    <recommendedName>
        <fullName evidence="1">Small ribosomal subunit protein uS11</fullName>
    </recommendedName>
    <alternativeName>
        <fullName evidence="2">30S ribosomal protein S11</fullName>
    </alternativeName>
</protein>
<accession>B8D826</accession>
<name>RS11_BUCAT</name>